<dbReference type="EMBL" id="BX548174">
    <property type="protein sequence ID" value="CAE19224.1"/>
    <property type="molecule type" value="Genomic_DNA"/>
</dbReference>
<dbReference type="SMR" id="Q7V1U0"/>
<dbReference type="STRING" id="59919.PMM0765"/>
<dbReference type="KEGG" id="pmm:PMM0765"/>
<dbReference type="eggNOG" id="COG0755">
    <property type="taxonomic scope" value="Bacteria"/>
</dbReference>
<dbReference type="HOGENOM" id="CLU_049710_2_4_3"/>
<dbReference type="OrthoDB" id="9814290at2"/>
<dbReference type="Proteomes" id="UP000001026">
    <property type="component" value="Chromosome"/>
</dbReference>
<dbReference type="GO" id="GO:0031676">
    <property type="term" value="C:plasma membrane-derived thylakoid membrane"/>
    <property type="evidence" value="ECO:0007669"/>
    <property type="project" value="UniProtKB-SubCell"/>
</dbReference>
<dbReference type="GO" id="GO:0020037">
    <property type="term" value="F:heme binding"/>
    <property type="evidence" value="ECO:0007669"/>
    <property type="project" value="InterPro"/>
</dbReference>
<dbReference type="GO" id="GO:0017004">
    <property type="term" value="P:cytochrome complex assembly"/>
    <property type="evidence" value="ECO:0007669"/>
    <property type="project" value="UniProtKB-UniRule"/>
</dbReference>
<dbReference type="HAMAP" id="MF_01391">
    <property type="entry name" value="CytC_CcsA"/>
    <property type="match status" value="1"/>
</dbReference>
<dbReference type="InterPro" id="IPR002541">
    <property type="entry name" value="Cyt_c_assembly"/>
</dbReference>
<dbReference type="InterPro" id="IPR017562">
    <property type="entry name" value="Cyt_c_biogenesis_CcsA"/>
</dbReference>
<dbReference type="InterPro" id="IPR045062">
    <property type="entry name" value="Cyt_c_biogenesis_CcsA/CcmC"/>
</dbReference>
<dbReference type="NCBIfam" id="TIGR03144">
    <property type="entry name" value="cytochr_II_ccsB"/>
    <property type="match status" value="1"/>
</dbReference>
<dbReference type="PANTHER" id="PTHR30071:SF1">
    <property type="entry name" value="CYTOCHROME B_B6 PROTEIN-RELATED"/>
    <property type="match status" value="1"/>
</dbReference>
<dbReference type="PANTHER" id="PTHR30071">
    <property type="entry name" value="HEME EXPORTER PROTEIN C"/>
    <property type="match status" value="1"/>
</dbReference>
<dbReference type="Pfam" id="PF01578">
    <property type="entry name" value="Cytochrom_C_asm"/>
    <property type="match status" value="1"/>
</dbReference>
<reference key="1">
    <citation type="journal article" date="2003" name="Nature">
        <title>Genome divergence in two Prochlorococcus ecotypes reflects oceanic niche differentiation.</title>
        <authorList>
            <person name="Rocap G."/>
            <person name="Larimer F.W."/>
            <person name="Lamerdin J.E."/>
            <person name="Malfatti S."/>
            <person name="Chain P."/>
            <person name="Ahlgren N.A."/>
            <person name="Arellano A."/>
            <person name="Coleman M."/>
            <person name="Hauser L."/>
            <person name="Hess W.R."/>
            <person name="Johnson Z.I."/>
            <person name="Land M.L."/>
            <person name="Lindell D."/>
            <person name="Post A.F."/>
            <person name="Regala W."/>
            <person name="Shah M."/>
            <person name="Shaw S.L."/>
            <person name="Steglich C."/>
            <person name="Sullivan M.B."/>
            <person name="Ting C.S."/>
            <person name="Tolonen A."/>
            <person name="Webb E.A."/>
            <person name="Zinser E.R."/>
            <person name="Chisholm S.W."/>
        </authorList>
    </citation>
    <scope>NUCLEOTIDE SEQUENCE [LARGE SCALE GENOMIC DNA]</scope>
    <source>
        <strain>CCMP1986 / NIES-2087 / MED4</strain>
    </source>
</reference>
<organism>
    <name type="scientific">Prochlorococcus marinus subsp. pastoris (strain CCMP1986 / NIES-2087 / MED4)</name>
    <dbReference type="NCBI Taxonomy" id="59919"/>
    <lineage>
        <taxon>Bacteria</taxon>
        <taxon>Bacillati</taxon>
        <taxon>Cyanobacteriota</taxon>
        <taxon>Cyanophyceae</taxon>
        <taxon>Synechococcales</taxon>
        <taxon>Prochlorococcaceae</taxon>
        <taxon>Prochlorococcus</taxon>
    </lineage>
</organism>
<name>CCSA_PROMP</name>
<gene>
    <name evidence="2" type="primary">ccsA</name>
    <name type="ordered locus">PMM0765</name>
</gene>
<comment type="function">
    <text evidence="2">Required during biogenesis of c-type cytochromes (cytochrome c6 and cytochrome f) at the step of heme attachment.</text>
</comment>
<comment type="subunit">
    <text evidence="1">May interact with ccs1.</text>
</comment>
<comment type="subcellular location">
    <subcellularLocation>
        <location evidence="2">Cellular thylakoid membrane</location>
        <topology evidence="2">Multi-pass membrane protein</topology>
    </subcellularLocation>
</comment>
<comment type="similarity">
    <text evidence="2">Belongs to the CcmF/CycK/Ccl1/NrfE/CcsA family.</text>
</comment>
<proteinExistence type="inferred from homology"/>
<protein>
    <recommendedName>
        <fullName evidence="2">Cytochrome c biogenesis protein CcsA</fullName>
    </recommendedName>
</protein>
<keyword id="KW-0201">Cytochrome c-type biogenesis</keyword>
<keyword id="KW-0472">Membrane</keyword>
<keyword id="KW-0793">Thylakoid</keyword>
<keyword id="KW-0812">Transmembrane</keyword>
<keyword id="KW-1133">Transmembrane helix</keyword>
<sequence>MIFDGFIKNFIYDPVSFIGILIFYFLLINLPISLISLFNKKSSSYVRLITILINLFIALQLISRWIISGHFPISNLYESLYFLVWGITLGQLLIEKEYSTPIIPAIAIPIELLTIAFACFVLPEDLKLSSNLVPALRSSWLVMHVSVVMLSYAALIMGSLLSASVLFINNSQPLQLRSSSMGVGGFKISNSYSTNNVIEPINFSHSEELDTLSYRSILVGFVLLTLGLITGAIWANEAWGTWWSWDPKETWAFISWLFYAAYLHMRISRGWQGRRPALLATSGFFVVLICYIGVNFLGVGLHSYGWIFGIFNLF</sequence>
<evidence type="ECO:0000250" key="1"/>
<evidence type="ECO:0000255" key="2">
    <source>
        <dbReference type="HAMAP-Rule" id="MF_01391"/>
    </source>
</evidence>
<accession>Q7V1U0</accession>
<feature type="chain" id="PRO_0000353712" description="Cytochrome c biogenesis protein CcsA">
    <location>
        <begin position="1"/>
        <end position="314"/>
    </location>
</feature>
<feature type="transmembrane region" description="Helical" evidence="2">
    <location>
        <begin position="15"/>
        <end position="35"/>
    </location>
</feature>
<feature type="transmembrane region" description="Helical" evidence="2">
    <location>
        <begin position="48"/>
        <end position="68"/>
    </location>
</feature>
<feature type="transmembrane region" description="Helical" evidence="2">
    <location>
        <begin position="73"/>
        <end position="93"/>
    </location>
</feature>
<feature type="transmembrane region" description="Helical" evidence="2">
    <location>
        <begin position="102"/>
        <end position="122"/>
    </location>
</feature>
<feature type="transmembrane region" description="Helical" evidence="2">
    <location>
        <begin position="148"/>
        <end position="168"/>
    </location>
</feature>
<feature type="transmembrane region" description="Helical" evidence="2">
    <location>
        <begin position="216"/>
        <end position="236"/>
    </location>
</feature>
<feature type="transmembrane region" description="Helical" evidence="2">
    <location>
        <begin position="250"/>
        <end position="267"/>
    </location>
</feature>
<feature type="transmembrane region" description="Helical" evidence="2">
    <location>
        <begin position="277"/>
        <end position="297"/>
    </location>
</feature>